<comment type="function">
    <text evidence="1">Catalyzes the conversion of uracil and 5-phospho-alpha-D-ribose 1-diphosphate (PRPP) to UMP and diphosphate.</text>
</comment>
<comment type="catalytic activity">
    <reaction evidence="1">
        <text>UMP + diphosphate = 5-phospho-alpha-D-ribose 1-diphosphate + uracil</text>
        <dbReference type="Rhea" id="RHEA:13017"/>
        <dbReference type="ChEBI" id="CHEBI:17568"/>
        <dbReference type="ChEBI" id="CHEBI:33019"/>
        <dbReference type="ChEBI" id="CHEBI:57865"/>
        <dbReference type="ChEBI" id="CHEBI:58017"/>
        <dbReference type="EC" id="2.4.2.9"/>
    </reaction>
</comment>
<comment type="cofactor">
    <cofactor evidence="1">
        <name>Mg(2+)</name>
        <dbReference type="ChEBI" id="CHEBI:18420"/>
    </cofactor>
    <text evidence="1">Binds 1 Mg(2+) ion per subunit. The magnesium is bound as Mg-PRPP.</text>
</comment>
<comment type="activity regulation">
    <text evidence="1">Allosterically activated by GTP.</text>
</comment>
<comment type="pathway">
    <text evidence="1">Pyrimidine metabolism; UMP biosynthesis via salvage pathway; UMP from uracil: step 1/1.</text>
</comment>
<comment type="similarity">
    <text evidence="1">Belongs to the UPRTase family.</text>
</comment>
<organism>
    <name type="scientific">Clostridium botulinum (strain Eklund 17B / Type B)</name>
    <dbReference type="NCBI Taxonomy" id="935198"/>
    <lineage>
        <taxon>Bacteria</taxon>
        <taxon>Bacillati</taxon>
        <taxon>Bacillota</taxon>
        <taxon>Clostridia</taxon>
        <taxon>Eubacteriales</taxon>
        <taxon>Clostridiaceae</taxon>
        <taxon>Clostridium</taxon>
    </lineage>
</organism>
<reference key="1">
    <citation type="submission" date="2008-04" db="EMBL/GenBank/DDBJ databases">
        <title>Complete sequence of Clostridium botulinum strain Eklund.</title>
        <authorList>
            <person name="Brinkac L.M."/>
            <person name="Brown J.L."/>
            <person name="Bruce D."/>
            <person name="Detter C."/>
            <person name="Munk C."/>
            <person name="Smith L.A."/>
            <person name="Smith T.J."/>
            <person name="Sutton G."/>
            <person name="Brettin T.S."/>
        </authorList>
    </citation>
    <scope>NUCLEOTIDE SEQUENCE [LARGE SCALE GENOMIC DNA]</scope>
    <source>
        <strain>Eklund 17B / Type B</strain>
    </source>
</reference>
<evidence type="ECO:0000255" key="1">
    <source>
        <dbReference type="HAMAP-Rule" id="MF_01218"/>
    </source>
</evidence>
<gene>
    <name evidence="1" type="primary">upp</name>
    <name type="ordered locus">CLL_A0487</name>
</gene>
<accession>B2TJY9</accession>
<dbReference type="EC" id="2.4.2.9" evidence="1"/>
<dbReference type="EMBL" id="CP001056">
    <property type="protein sequence ID" value="ACD22085.1"/>
    <property type="molecule type" value="Genomic_DNA"/>
</dbReference>
<dbReference type="SMR" id="B2TJY9"/>
<dbReference type="KEGG" id="cbk:CLL_A0487"/>
<dbReference type="PATRIC" id="fig|935198.13.peg.442"/>
<dbReference type="HOGENOM" id="CLU_067096_2_2_9"/>
<dbReference type="UniPathway" id="UPA00574">
    <property type="reaction ID" value="UER00636"/>
</dbReference>
<dbReference type="Proteomes" id="UP000001195">
    <property type="component" value="Chromosome"/>
</dbReference>
<dbReference type="GO" id="GO:0005525">
    <property type="term" value="F:GTP binding"/>
    <property type="evidence" value="ECO:0007669"/>
    <property type="project" value="UniProtKB-KW"/>
</dbReference>
<dbReference type="GO" id="GO:0000287">
    <property type="term" value="F:magnesium ion binding"/>
    <property type="evidence" value="ECO:0007669"/>
    <property type="project" value="UniProtKB-UniRule"/>
</dbReference>
<dbReference type="GO" id="GO:0004845">
    <property type="term" value="F:uracil phosphoribosyltransferase activity"/>
    <property type="evidence" value="ECO:0007669"/>
    <property type="project" value="UniProtKB-UniRule"/>
</dbReference>
<dbReference type="GO" id="GO:0044206">
    <property type="term" value="P:UMP salvage"/>
    <property type="evidence" value="ECO:0007669"/>
    <property type="project" value="UniProtKB-UniRule"/>
</dbReference>
<dbReference type="GO" id="GO:0006223">
    <property type="term" value="P:uracil salvage"/>
    <property type="evidence" value="ECO:0007669"/>
    <property type="project" value="InterPro"/>
</dbReference>
<dbReference type="CDD" id="cd06223">
    <property type="entry name" value="PRTases_typeI"/>
    <property type="match status" value="1"/>
</dbReference>
<dbReference type="FunFam" id="3.40.50.2020:FF:000003">
    <property type="entry name" value="Uracil phosphoribosyltransferase"/>
    <property type="match status" value="1"/>
</dbReference>
<dbReference type="Gene3D" id="3.40.50.2020">
    <property type="match status" value="1"/>
</dbReference>
<dbReference type="HAMAP" id="MF_01218_B">
    <property type="entry name" value="Upp_B"/>
    <property type="match status" value="1"/>
</dbReference>
<dbReference type="InterPro" id="IPR000836">
    <property type="entry name" value="PRibTrfase_dom"/>
</dbReference>
<dbReference type="InterPro" id="IPR029057">
    <property type="entry name" value="PRTase-like"/>
</dbReference>
<dbReference type="InterPro" id="IPR034332">
    <property type="entry name" value="Upp_B"/>
</dbReference>
<dbReference type="InterPro" id="IPR050054">
    <property type="entry name" value="UPRTase/APRTase"/>
</dbReference>
<dbReference type="InterPro" id="IPR005765">
    <property type="entry name" value="Ura_phspho_trans"/>
</dbReference>
<dbReference type="NCBIfam" id="NF001097">
    <property type="entry name" value="PRK00129.1"/>
    <property type="match status" value="1"/>
</dbReference>
<dbReference type="NCBIfam" id="TIGR01091">
    <property type="entry name" value="upp"/>
    <property type="match status" value="1"/>
</dbReference>
<dbReference type="PANTHER" id="PTHR32315">
    <property type="entry name" value="ADENINE PHOSPHORIBOSYLTRANSFERASE"/>
    <property type="match status" value="1"/>
</dbReference>
<dbReference type="PANTHER" id="PTHR32315:SF4">
    <property type="entry name" value="URACIL PHOSPHORIBOSYLTRANSFERASE, CHLOROPLASTIC"/>
    <property type="match status" value="1"/>
</dbReference>
<dbReference type="Pfam" id="PF14681">
    <property type="entry name" value="UPRTase"/>
    <property type="match status" value="1"/>
</dbReference>
<dbReference type="SUPFAM" id="SSF53271">
    <property type="entry name" value="PRTase-like"/>
    <property type="match status" value="1"/>
</dbReference>
<name>UPP_CLOBB</name>
<protein>
    <recommendedName>
        <fullName evidence="1">Uracil phosphoribosyltransferase</fullName>
        <ecNumber evidence="1">2.4.2.9</ecNumber>
    </recommendedName>
    <alternativeName>
        <fullName evidence="1">UMP pyrophosphorylase</fullName>
    </alternativeName>
    <alternativeName>
        <fullName evidence="1">UPRTase</fullName>
    </alternativeName>
</protein>
<keyword id="KW-0021">Allosteric enzyme</keyword>
<keyword id="KW-0328">Glycosyltransferase</keyword>
<keyword id="KW-0342">GTP-binding</keyword>
<keyword id="KW-0460">Magnesium</keyword>
<keyword id="KW-0547">Nucleotide-binding</keyword>
<keyword id="KW-0808">Transferase</keyword>
<sequence>MSKVIEVNHPLVLHKLSMVRSKDTGSKDFKELVKEISMLLTYEATRDINMDEVEIETPVCKTKCRVVSGKKMAIVPILRAGLGMVDGVLSLIPAAKIGHIGLYRDEETLQPVEYFCKLPKDIEERDVIVVDPMLATGGSAADALTMLKEKGAKNLKLMCLISAPEGIKLVQEKHPDVDIYVASIDEKLNEKGYIVPGLGDAGDRLYGTK</sequence>
<feature type="chain" id="PRO_1000139108" description="Uracil phosphoribosyltransferase">
    <location>
        <begin position="1"/>
        <end position="209"/>
    </location>
</feature>
<feature type="binding site" evidence="1">
    <location>
        <position position="79"/>
    </location>
    <ligand>
        <name>5-phospho-alpha-D-ribose 1-diphosphate</name>
        <dbReference type="ChEBI" id="CHEBI:58017"/>
    </ligand>
</feature>
<feature type="binding site" evidence="1">
    <location>
        <position position="104"/>
    </location>
    <ligand>
        <name>5-phospho-alpha-D-ribose 1-diphosphate</name>
        <dbReference type="ChEBI" id="CHEBI:58017"/>
    </ligand>
</feature>
<feature type="binding site" evidence="1">
    <location>
        <begin position="131"/>
        <end position="139"/>
    </location>
    <ligand>
        <name>5-phospho-alpha-D-ribose 1-diphosphate</name>
        <dbReference type="ChEBI" id="CHEBI:58017"/>
    </ligand>
</feature>
<feature type="binding site" evidence="1">
    <location>
        <position position="194"/>
    </location>
    <ligand>
        <name>uracil</name>
        <dbReference type="ChEBI" id="CHEBI:17568"/>
    </ligand>
</feature>
<feature type="binding site" evidence="1">
    <location>
        <begin position="199"/>
        <end position="201"/>
    </location>
    <ligand>
        <name>uracil</name>
        <dbReference type="ChEBI" id="CHEBI:17568"/>
    </ligand>
</feature>
<feature type="binding site" evidence="1">
    <location>
        <position position="200"/>
    </location>
    <ligand>
        <name>5-phospho-alpha-D-ribose 1-diphosphate</name>
        <dbReference type="ChEBI" id="CHEBI:58017"/>
    </ligand>
</feature>
<proteinExistence type="inferred from homology"/>